<protein>
    <recommendedName>
        <fullName evidence="1">Small ribosomal subunit protein uS4</fullName>
    </recommendedName>
    <alternativeName>
        <fullName evidence="3">30S ribosomal protein S4</fullName>
    </alternativeName>
</protein>
<name>RS4_BORBR</name>
<evidence type="ECO:0000255" key="1">
    <source>
        <dbReference type="HAMAP-Rule" id="MF_01306"/>
    </source>
</evidence>
<evidence type="ECO:0000256" key="2">
    <source>
        <dbReference type="SAM" id="MobiDB-lite"/>
    </source>
</evidence>
<evidence type="ECO:0000305" key="3"/>
<sequence length="207" mass="23366">MARYIGPKCKLSRREGTDLFLKSARRSLDSKCKLDSKPGQHGRTSGARTSDYGLQLREKQKLKRMYGVLEKQFRKYFVEAERRRGNTGETLIQLLESRLDNVVYRMGFGSTRAEARQLVSHRAIELNGHTADIASMLVKAGDVISIREKAKKQGRIRESLDLAASIGLPQWVEVDASKMTGTFKSAPDRADVARDVNESMVVELYSR</sequence>
<reference key="1">
    <citation type="journal article" date="2003" name="Nat. Genet.">
        <title>Comparative analysis of the genome sequences of Bordetella pertussis, Bordetella parapertussis and Bordetella bronchiseptica.</title>
        <authorList>
            <person name="Parkhill J."/>
            <person name="Sebaihia M."/>
            <person name="Preston A."/>
            <person name="Murphy L.D."/>
            <person name="Thomson N.R."/>
            <person name="Harris D.E."/>
            <person name="Holden M.T.G."/>
            <person name="Churcher C.M."/>
            <person name="Bentley S.D."/>
            <person name="Mungall K.L."/>
            <person name="Cerdeno-Tarraga A.-M."/>
            <person name="Temple L."/>
            <person name="James K.D."/>
            <person name="Harris B."/>
            <person name="Quail M.A."/>
            <person name="Achtman M."/>
            <person name="Atkin R."/>
            <person name="Baker S."/>
            <person name="Basham D."/>
            <person name="Bason N."/>
            <person name="Cherevach I."/>
            <person name="Chillingworth T."/>
            <person name="Collins M."/>
            <person name="Cronin A."/>
            <person name="Davis P."/>
            <person name="Doggett J."/>
            <person name="Feltwell T."/>
            <person name="Goble A."/>
            <person name="Hamlin N."/>
            <person name="Hauser H."/>
            <person name="Holroyd S."/>
            <person name="Jagels K."/>
            <person name="Leather S."/>
            <person name="Moule S."/>
            <person name="Norberczak H."/>
            <person name="O'Neil S."/>
            <person name="Ormond D."/>
            <person name="Price C."/>
            <person name="Rabbinowitsch E."/>
            <person name="Rutter S."/>
            <person name="Sanders M."/>
            <person name="Saunders D."/>
            <person name="Seeger K."/>
            <person name="Sharp S."/>
            <person name="Simmonds M."/>
            <person name="Skelton J."/>
            <person name="Squares R."/>
            <person name="Squares S."/>
            <person name="Stevens K."/>
            <person name="Unwin L."/>
            <person name="Whitehead S."/>
            <person name="Barrell B.G."/>
            <person name="Maskell D.J."/>
        </authorList>
    </citation>
    <scope>NUCLEOTIDE SEQUENCE [LARGE SCALE GENOMIC DNA]</scope>
    <source>
        <strain>ATCC BAA-588 / NCTC 13252 / RB50</strain>
    </source>
</reference>
<accession>P0A4C6</accession>
<accession>P46774</accession>
<dbReference type="EMBL" id="BX640437">
    <property type="protein sequence ID" value="CAE30558.1"/>
    <property type="molecule type" value="Genomic_DNA"/>
</dbReference>
<dbReference type="RefSeq" id="WP_003806931.1">
    <property type="nucleotide sequence ID" value="NC_002927.3"/>
</dbReference>
<dbReference type="SMR" id="P0A4C6"/>
<dbReference type="GeneID" id="93206286"/>
<dbReference type="KEGG" id="bbr:BB0056"/>
<dbReference type="eggNOG" id="COG0522">
    <property type="taxonomic scope" value="Bacteria"/>
</dbReference>
<dbReference type="HOGENOM" id="CLU_092403_0_2_4"/>
<dbReference type="Proteomes" id="UP000001027">
    <property type="component" value="Chromosome"/>
</dbReference>
<dbReference type="GO" id="GO:0015935">
    <property type="term" value="C:small ribosomal subunit"/>
    <property type="evidence" value="ECO:0007669"/>
    <property type="project" value="InterPro"/>
</dbReference>
<dbReference type="GO" id="GO:0019843">
    <property type="term" value="F:rRNA binding"/>
    <property type="evidence" value="ECO:0007669"/>
    <property type="project" value="UniProtKB-UniRule"/>
</dbReference>
<dbReference type="GO" id="GO:0003735">
    <property type="term" value="F:structural constituent of ribosome"/>
    <property type="evidence" value="ECO:0007669"/>
    <property type="project" value="InterPro"/>
</dbReference>
<dbReference type="GO" id="GO:0042274">
    <property type="term" value="P:ribosomal small subunit biogenesis"/>
    <property type="evidence" value="ECO:0007669"/>
    <property type="project" value="TreeGrafter"/>
</dbReference>
<dbReference type="GO" id="GO:0006412">
    <property type="term" value="P:translation"/>
    <property type="evidence" value="ECO:0007669"/>
    <property type="project" value="UniProtKB-UniRule"/>
</dbReference>
<dbReference type="CDD" id="cd00165">
    <property type="entry name" value="S4"/>
    <property type="match status" value="1"/>
</dbReference>
<dbReference type="FunFam" id="1.10.1050.10:FF:000001">
    <property type="entry name" value="30S ribosomal protein S4"/>
    <property type="match status" value="1"/>
</dbReference>
<dbReference type="FunFam" id="3.10.290.10:FF:000001">
    <property type="entry name" value="30S ribosomal protein S4"/>
    <property type="match status" value="1"/>
</dbReference>
<dbReference type="Gene3D" id="1.10.1050.10">
    <property type="entry name" value="Ribosomal Protein S4 Delta 41, Chain A, domain 1"/>
    <property type="match status" value="1"/>
</dbReference>
<dbReference type="Gene3D" id="3.10.290.10">
    <property type="entry name" value="RNA-binding S4 domain"/>
    <property type="match status" value="1"/>
</dbReference>
<dbReference type="HAMAP" id="MF_01306_B">
    <property type="entry name" value="Ribosomal_uS4_B"/>
    <property type="match status" value="1"/>
</dbReference>
<dbReference type="InterPro" id="IPR022801">
    <property type="entry name" value="Ribosomal_uS4"/>
</dbReference>
<dbReference type="InterPro" id="IPR005709">
    <property type="entry name" value="Ribosomal_uS4_bac-type"/>
</dbReference>
<dbReference type="InterPro" id="IPR018079">
    <property type="entry name" value="Ribosomal_uS4_CS"/>
</dbReference>
<dbReference type="InterPro" id="IPR001912">
    <property type="entry name" value="Ribosomal_uS4_N"/>
</dbReference>
<dbReference type="InterPro" id="IPR002942">
    <property type="entry name" value="S4_RNA-bd"/>
</dbReference>
<dbReference type="InterPro" id="IPR036986">
    <property type="entry name" value="S4_RNA-bd_sf"/>
</dbReference>
<dbReference type="NCBIfam" id="NF003717">
    <property type="entry name" value="PRK05327.1"/>
    <property type="match status" value="1"/>
</dbReference>
<dbReference type="NCBIfam" id="TIGR01017">
    <property type="entry name" value="rpsD_bact"/>
    <property type="match status" value="1"/>
</dbReference>
<dbReference type="PANTHER" id="PTHR11831">
    <property type="entry name" value="30S 40S RIBOSOMAL PROTEIN"/>
    <property type="match status" value="1"/>
</dbReference>
<dbReference type="PANTHER" id="PTHR11831:SF4">
    <property type="entry name" value="SMALL RIBOSOMAL SUBUNIT PROTEIN US4M"/>
    <property type="match status" value="1"/>
</dbReference>
<dbReference type="Pfam" id="PF00163">
    <property type="entry name" value="Ribosomal_S4"/>
    <property type="match status" value="1"/>
</dbReference>
<dbReference type="Pfam" id="PF01479">
    <property type="entry name" value="S4"/>
    <property type="match status" value="1"/>
</dbReference>
<dbReference type="SMART" id="SM01390">
    <property type="entry name" value="Ribosomal_S4"/>
    <property type="match status" value="1"/>
</dbReference>
<dbReference type="SMART" id="SM00363">
    <property type="entry name" value="S4"/>
    <property type="match status" value="1"/>
</dbReference>
<dbReference type="SUPFAM" id="SSF55174">
    <property type="entry name" value="Alpha-L RNA-binding motif"/>
    <property type="match status" value="1"/>
</dbReference>
<dbReference type="PROSITE" id="PS00632">
    <property type="entry name" value="RIBOSOMAL_S4"/>
    <property type="match status" value="1"/>
</dbReference>
<dbReference type="PROSITE" id="PS50889">
    <property type="entry name" value="S4"/>
    <property type="match status" value="1"/>
</dbReference>
<gene>
    <name evidence="1" type="primary">rpsD</name>
    <name type="ordered locus">BB0056</name>
</gene>
<keyword id="KW-0687">Ribonucleoprotein</keyword>
<keyword id="KW-0689">Ribosomal protein</keyword>
<keyword id="KW-0694">RNA-binding</keyword>
<keyword id="KW-0699">rRNA-binding</keyword>
<organism>
    <name type="scientific">Bordetella bronchiseptica (strain ATCC BAA-588 / NCTC 13252 / RB50)</name>
    <name type="common">Alcaligenes bronchisepticus</name>
    <dbReference type="NCBI Taxonomy" id="257310"/>
    <lineage>
        <taxon>Bacteria</taxon>
        <taxon>Pseudomonadati</taxon>
        <taxon>Pseudomonadota</taxon>
        <taxon>Betaproteobacteria</taxon>
        <taxon>Burkholderiales</taxon>
        <taxon>Alcaligenaceae</taxon>
        <taxon>Bordetella</taxon>
    </lineage>
</organism>
<feature type="chain" id="PRO_0000132346" description="Small ribosomal subunit protein uS4">
    <location>
        <begin position="1"/>
        <end position="207"/>
    </location>
</feature>
<feature type="domain" description="S4 RNA-binding" evidence="1">
    <location>
        <begin position="97"/>
        <end position="162"/>
    </location>
</feature>
<feature type="region of interest" description="Disordered" evidence="2">
    <location>
        <begin position="31"/>
        <end position="51"/>
    </location>
</feature>
<comment type="function">
    <text evidence="1">One of the primary rRNA binding proteins, it binds directly to 16S rRNA where it nucleates assembly of the body of the 30S subunit.</text>
</comment>
<comment type="function">
    <text evidence="1">With S5 and S12 plays an important role in translational accuracy.</text>
</comment>
<comment type="subunit">
    <text evidence="1">Part of the 30S ribosomal subunit. Contacts protein S5. The interaction surface between S4 and S5 is involved in control of translational fidelity.</text>
</comment>
<comment type="similarity">
    <text evidence="1">Belongs to the universal ribosomal protein uS4 family.</text>
</comment>
<proteinExistence type="inferred from homology"/>